<proteinExistence type="evidence at transcript level"/>
<name>ENPL_PONAB</name>
<feature type="signal peptide" evidence="1">
    <location>
        <begin position="1"/>
        <end position="21"/>
    </location>
</feature>
<feature type="chain" id="PRO_0000233905" description="Endoplasmin">
    <location>
        <begin position="22"/>
        <end position="804"/>
    </location>
</feature>
<feature type="region of interest" description="Disordered" evidence="7">
    <location>
        <begin position="288"/>
        <end position="323"/>
    </location>
</feature>
<feature type="region of interest" description="Disordered" evidence="7">
    <location>
        <begin position="750"/>
        <end position="804"/>
    </location>
</feature>
<feature type="short sequence motif" description="SRT pseudosubstrate motif" evidence="3">
    <location>
        <begin position="42"/>
        <end position="44"/>
    </location>
</feature>
<feature type="short sequence motif" description="Prevents secretion from ER" evidence="1">
    <location>
        <begin position="801"/>
        <end position="804"/>
    </location>
</feature>
<feature type="compositionally biased region" description="Acidic residues" evidence="7">
    <location>
        <begin position="289"/>
        <end position="317"/>
    </location>
</feature>
<feature type="compositionally biased region" description="Acidic residues" evidence="7">
    <location>
        <begin position="757"/>
        <end position="791"/>
    </location>
</feature>
<feature type="compositionally biased region" description="Basic and acidic residues" evidence="7">
    <location>
        <begin position="792"/>
        <end position="804"/>
    </location>
</feature>
<feature type="binding site" evidence="4">
    <location>
        <position position="107"/>
    </location>
    <ligand>
        <name>ATP</name>
        <dbReference type="ChEBI" id="CHEBI:30616"/>
    </ligand>
</feature>
<feature type="binding site" evidence="4">
    <location>
        <position position="149"/>
    </location>
    <ligand>
        <name>ATP</name>
        <dbReference type="ChEBI" id="CHEBI:30616"/>
    </ligand>
</feature>
<feature type="binding site" evidence="4">
    <location>
        <position position="162"/>
    </location>
    <ligand>
        <name>ATP</name>
        <dbReference type="ChEBI" id="CHEBI:30616"/>
    </ligand>
</feature>
<feature type="binding site" evidence="4">
    <location>
        <position position="199"/>
    </location>
    <ligand>
        <name>ATP</name>
        <dbReference type="ChEBI" id="CHEBI:30616"/>
    </ligand>
</feature>
<feature type="site" description="Important for ATP hydrolysis" evidence="4">
    <location>
        <position position="448"/>
    </location>
</feature>
<feature type="modified residue" description="Phosphoserine" evidence="3">
    <location>
        <position position="64"/>
    </location>
</feature>
<feature type="modified residue" description="N6-(2-hydroxyisobutyryl)lysine" evidence="3">
    <location>
        <position position="168"/>
    </location>
</feature>
<feature type="modified residue" description="Phosphoserine" evidence="5">
    <location>
        <position position="172"/>
    </location>
</feature>
<feature type="modified residue" description="Phosphoserine" evidence="3">
    <location>
        <position position="306"/>
    </location>
</feature>
<feature type="modified residue" description="Phosphoserine" evidence="5">
    <location>
        <position position="403"/>
    </location>
</feature>
<feature type="modified residue" description="N6-succinyllysine" evidence="2">
    <location>
        <position position="404"/>
    </location>
</feature>
<feature type="modified residue" description="Phosphoserine" evidence="3">
    <location>
        <position position="447"/>
    </location>
</feature>
<feature type="modified residue" description="N6-acetyllysine" evidence="2">
    <location>
        <position position="479"/>
    </location>
</feature>
<feature type="modified residue" description="N6-succinyllysine" evidence="2">
    <location>
        <position position="633"/>
    </location>
</feature>
<feature type="modified residue" description="Phosphothreonine" evidence="3">
    <location>
        <position position="786"/>
    </location>
</feature>
<feature type="glycosylation site" description="N-linked (GlcNAc...) asparagine" evidence="6">
    <location>
        <position position="62"/>
    </location>
</feature>
<feature type="glycosylation site" description="N-linked (GlcNAc...) asparagine" evidence="6">
    <location>
        <position position="107"/>
    </location>
</feature>
<feature type="glycosylation site" description="N-linked (GlcNAc...) asparagine" evidence="6">
    <location>
        <position position="217"/>
    </location>
</feature>
<feature type="glycosylation site" description="N-linked (GlcNAc...) asparagine" evidence="6">
    <location>
        <position position="445"/>
    </location>
</feature>
<feature type="glycosylation site" description="N-linked (GlcNAc...) asparagine" evidence="6">
    <location>
        <position position="481"/>
    </location>
</feature>
<feature type="glycosylation site" description="N-linked (GlcNAc...) asparagine" evidence="6">
    <location>
        <position position="502"/>
    </location>
</feature>
<feature type="disulfide bond" description="Interchain" evidence="2">
    <location>
        <position position="138"/>
    </location>
</feature>
<organism>
    <name type="scientific">Pongo abelii</name>
    <name type="common">Sumatran orangutan</name>
    <name type="synonym">Pongo pygmaeus abelii</name>
    <dbReference type="NCBI Taxonomy" id="9601"/>
    <lineage>
        <taxon>Eukaryota</taxon>
        <taxon>Metazoa</taxon>
        <taxon>Chordata</taxon>
        <taxon>Craniata</taxon>
        <taxon>Vertebrata</taxon>
        <taxon>Euteleostomi</taxon>
        <taxon>Mammalia</taxon>
        <taxon>Eutheria</taxon>
        <taxon>Euarchontoglires</taxon>
        <taxon>Primates</taxon>
        <taxon>Haplorrhini</taxon>
        <taxon>Catarrhini</taxon>
        <taxon>Hominidae</taxon>
        <taxon>Pongo</taxon>
    </lineage>
</organism>
<sequence>MRALWVLGLCCVLLTFGSVRADDEVDVDGTVEEDLGKSREGSRTDDEVVQREEEAIQLDGLNASQIRELREKSEKFAFQAEVNRMMKLIINSLYKNKEIFLRELISNASDALDKIRLISLTDENALSGNEELTVKIKCDKEKNLLHVTDTGVGMTREELVKNLGTIAKSGTSEFLNKMTEAQEDGQSTSELIGQFGVGFCSAFLVADKVIVTSKHNNDTQHIWESDSNEFSVIADPRGNTLGRGTTITLVLKEEASDYLELDTIKNLVKKYSQFINFPIYVWSSKTETVEEPMEEEEAAKEEKEESDDEAAVEEEEEEKKPKTKKVEKTVWDWELMNDIKPIWQRPSKEVEEDEYKAFYKSFSKESDDPMAYIHFTAEGEVTFKSILFVPTSAPRGLFDEYGSKKSDYIKLYVRRVFITDDFHDMMPKYLNFVKGVVDSDDLPLNVSRETLQQHKLLKVIRKKLVRKTLDMIKKIADDKYNDTFWKEFGTNIKLGVIEDHSNRTRLAKLLRFQSSHHPTDITSLDQYVERMKEKQDKIYFMAGSSRKEAESSPFVERLLKKGYEVIYLTEPVDEYCIQALPEFDGKRFQNVAKEGVKFDESEKTKESREAIEKEFEPLLNWMKDKALKDKIEKAVVSQRLTESPCALVASQYGWSGNMERIMKAQAYQTGKDISTNYYASQKKTFEINPRHPLIRDMLRRIKEDEDDKTVLDLAVVLFETATLRSGYLLPDTKAYGDRIERMLRLSLNIDPDAKVEEEPEEEPEETTEDTTEDTEQDEDEEMDVGTDEEEQETAKESTAEKDEL</sequence>
<protein>
    <recommendedName>
        <fullName>Endoplasmin</fullName>
        <ecNumber evidence="4">3.6.4.-</ecNumber>
    </recommendedName>
    <alternativeName>
        <fullName>Heat shock protein 90 kDa beta member 1</fullName>
    </alternativeName>
</protein>
<evidence type="ECO:0000250" key="1"/>
<evidence type="ECO:0000250" key="2">
    <source>
        <dbReference type="UniProtKB" id="P08113"/>
    </source>
</evidence>
<evidence type="ECO:0000250" key="3">
    <source>
        <dbReference type="UniProtKB" id="P14625"/>
    </source>
</evidence>
<evidence type="ECO:0000250" key="4">
    <source>
        <dbReference type="UniProtKB" id="P41148"/>
    </source>
</evidence>
<evidence type="ECO:0000250" key="5">
    <source>
        <dbReference type="UniProtKB" id="Q66HD0"/>
    </source>
</evidence>
<evidence type="ECO:0000255" key="6"/>
<evidence type="ECO:0000256" key="7">
    <source>
        <dbReference type="SAM" id="MobiDB-lite"/>
    </source>
</evidence>
<evidence type="ECO:0000305" key="8"/>
<accession>Q5R6F7</accession>
<keyword id="KW-0007">Acetylation</keyword>
<keyword id="KW-0067">ATP-binding</keyword>
<keyword id="KW-0106">Calcium</keyword>
<keyword id="KW-0143">Chaperone</keyword>
<keyword id="KW-1015">Disulfide bond</keyword>
<keyword id="KW-0256">Endoplasmic reticulum</keyword>
<keyword id="KW-0325">Glycoprotein</keyword>
<keyword id="KW-0378">Hydrolase</keyword>
<keyword id="KW-0379">Hydroxylation</keyword>
<keyword id="KW-0547">Nucleotide-binding</keyword>
<keyword id="KW-0597">Phosphoprotein</keyword>
<keyword id="KW-1185">Reference proteome</keyword>
<keyword id="KW-0703">Sarcoplasmic reticulum</keyword>
<keyword id="KW-0732">Signal</keyword>
<gene>
    <name type="primary">HSP90B1</name>
    <name evidence="3" type="synonym">HSPC4</name>
</gene>
<reference key="1">
    <citation type="submission" date="2004-11" db="EMBL/GenBank/DDBJ databases">
        <authorList>
            <consortium name="The German cDNA consortium"/>
        </authorList>
    </citation>
    <scope>NUCLEOTIDE SEQUENCE [LARGE SCALE MRNA]</scope>
    <source>
        <tissue>Brain cortex</tissue>
    </source>
</reference>
<comment type="function">
    <text evidence="2 3">ATP-dependent chaperone involved in the processing of proteins in the endoplasmic reticulum, regulating their transport. Together with MESD, acts as a modulator of the Wnt pathway by promoting the folding of LRP6, a coreceptor of the canonical Wnt pathway (By similarity). When associated with CNPY3, required for proper folding of Toll-like receptors (By similarity). Promotes folding and trafficking of TLR4 to the cell surface. May participate in the unfolding of cytosolic leaderless cargos (lacking the secretion signal sequence) such as the interleukin 1/IL-1 to facilitate their translocation into the ERGIC (endoplasmic reticulum-Golgi intermediate compartment) and secretion; the translocation process is mediated by the cargo receptor TMED10 (By similarity).</text>
</comment>
<comment type="catalytic activity">
    <reaction evidence="4">
        <text>ATP + H2O = ADP + phosphate + H(+)</text>
        <dbReference type="Rhea" id="RHEA:13065"/>
        <dbReference type="ChEBI" id="CHEBI:15377"/>
        <dbReference type="ChEBI" id="CHEBI:15378"/>
        <dbReference type="ChEBI" id="CHEBI:30616"/>
        <dbReference type="ChEBI" id="CHEBI:43474"/>
        <dbReference type="ChEBI" id="CHEBI:456216"/>
    </reaction>
    <physiologicalReaction direction="left-to-right" evidence="4">
        <dbReference type="Rhea" id="RHEA:13066"/>
    </physiologicalReaction>
</comment>
<comment type="subunit">
    <text evidence="2 3">Homodimer; disulfide-linked. Component of an EIF2 complex at least composed of CELF1/CUGBP1, CALR, CALR3, EIF2S1, EIF2S2, HSP90B1 and HSPA5 (By similarity). Part of a large chaperone multiprotein complex comprising DNAJB11, HSP90B1, HSPA5, HYOU, PDIA2, PDIA4, PDIA6, PPIB, SDF2L1, UGGT1 and very small amounts of ERP29, but not, or at very low levels, CALR nor CANX. Interacts with AIMP1; regulates its retention in the endoplasmic reticulum. Hyperglycosylated form interacts with OS9; promoting its degradation by the endoplasmic reticulum associated degradation (ERAD) (By similarity). Interacts with CNPY3. This interaction is disrupted in the presence of ATP (By similarity). Interacts with TLR4 and TLR9, but not with TLR3 (By similarity). Interacts with MZB1 in a calcium-dependent manner (By similarity). Interacts with METTL23. Interacts with IL1B; the interaction facilitates cargo translocation into the ERGIC. Interacts with EIF2AK3 (By similarity).</text>
</comment>
<comment type="subcellular location">
    <subcellularLocation>
        <location evidence="3">Endoplasmic reticulum lumen</location>
    </subcellularLocation>
    <subcellularLocation>
        <location evidence="4">Sarcoplasmic reticulum lumen</location>
    </subcellularLocation>
    <subcellularLocation>
        <location evidence="3">Melanosome</location>
    </subcellularLocation>
</comment>
<comment type="domain">
    <text evidence="3">The SRT pseudosubstrate motif associates with STT3A during translation in normal conditions, preventing glycosylation of facultative sites until HSP90B1 folding is completed.</text>
</comment>
<comment type="PTM">
    <text evidence="4">Phosphorylated by CK2.</text>
</comment>
<comment type="PTM">
    <text evidence="3">N-glycosylated cotranslationally at Asn-217 by STT3A-containing OST-A complex: this glycosylation is constitutive. In response to various stress, 5 additional facultative sites (Asn-62, Asn-107, Asn-445, Asn-481 and Asn-502) can be glycosylated post-translationally by STT3B-containing OST-B complex, leading to a hyperglycosylated form that is degraded by the ER-associated degradation (ERAD) pathway. In normal conditions, the OST-A complex together with CCDC134 prevent glycosylation at facultative sites during protein folding, thereby preventing hyperglycosylation. Mechanistically, nascent HSP90B1 is tethered during translation to a specialized CCDC134-containing translocon that forms a microenvironment for its folding, in which STT3A associates with the SRT pseudosubstrate motif, and prevents access to facultative glycosylation sites until folding is completed, rendering its facultative sites inaccessible to the OST-B complex.</text>
</comment>
<comment type="similarity">
    <text evidence="8">Belongs to the heat shock protein 90 family.</text>
</comment>
<dbReference type="EC" id="3.6.4.-" evidence="4"/>
<dbReference type="EMBL" id="CR860533">
    <property type="protein sequence ID" value="CAH92659.1"/>
    <property type="molecule type" value="mRNA"/>
</dbReference>
<dbReference type="RefSeq" id="NP_001127573.1">
    <property type="nucleotide sequence ID" value="NM_001134101.1"/>
</dbReference>
<dbReference type="SMR" id="Q5R6F7"/>
<dbReference type="FunCoup" id="Q5R6F7">
    <property type="interactions" value="2567"/>
</dbReference>
<dbReference type="STRING" id="9601.ENSPPYP00000023483"/>
<dbReference type="GlyCosmos" id="Q5R6F7">
    <property type="glycosylation" value="6 sites, No reported glycans"/>
</dbReference>
<dbReference type="GeneID" id="100174651"/>
<dbReference type="KEGG" id="pon:100174651"/>
<dbReference type="CTD" id="7184"/>
<dbReference type="eggNOG" id="KOG0020">
    <property type="taxonomic scope" value="Eukaryota"/>
</dbReference>
<dbReference type="InParanoid" id="Q5R6F7"/>
<dbReference type="OrthoDB" id="5426351at2759"/>
<dbReference type="Proteomes" id="UP000001595">
    <property type="component" value="Unplaced"/>
</dbReference>
<dbReference type="GO" id="GO:0042470">
    <property type="term" value="C:melanosome"/>
    <property type="evidence" value="ECO:0007669"/>
    <property type="project" value="UniProtKB-SubCell"/>
</dbReference>
<dbReference type="GO" id="GO:0033018">
    <property type="term" value="C:sarcoplasmic reticulum lumen"/>
    <property type="evidence" value="ECO:0007669"/>
    <property type="project" value="UniProtKB-SubCell"/>
</dbReference>
<dbReference type="GO" id="GO:0005524">
    <property type="term" value="F:ATP binding"/>
    <property type="evidence" value="ECO:0007669"/>
    <property type="project" value="UniProtKB-KW"/>
</dbReference>
<dbReference type="GO" id="GO:0016887">
    <property type="term" value="F:ATP hydrolysis activity"/>
    <property type="evidence" value="ECO:0007669"/>
    <property type="project" value="InterPro"/>
</dbReference>
<dbReference type="GO" id="GO:0140662">
    <property type="term" value="F:ATP-dependent protein folding chaperone"/>
    <property type="evidence" value="ECO:0007669"/>
    <property type="project" value="InterPro"/>
</dbReference>
<dbReference type="GO" id="GO:0051082">
    <property type="term" value="F:unfolded protein binding"/>
    <property type="evidence" value="ECO:0007669"/>
    <property type="project" value="InterPro"/>
</dbReference>
<dbReference type="GO" id="GO:0036503">
    <property type="term" value="P:ERAD pathway"/>
    <property type="evidence" value="ECO:0000250"/>
    <property type="project" value="UniProtKB"/>
</dbReference>
<dbReference type="CDD" id="cd16927">
    <property type="entry name" value="HATPase_Hsp90-like"/>
    <property type="match status" value="1"/>
</dbReference>
<dbReference type="FunFam" id="3.30.230.80:FF:000003">
    <property type="entry name" value="endoplasmin isoform X1"/>
    <property type="match status" value="1"/>
</dbReference>
<dbReference type="FunFam" id="1.20.120.790:FF:000003">
    <property type="entry name" value="Heat shock protein 90"/>
    <property type="match status" value="1"/>
</dbReference>
<dbReference type="FunFam" id="3.30.565.10:FF:000005">
    <property type="entry name" value="Heat shock protein 90"/>
    <property type="match status" value="1"/>
</dbReference>
<dbReference type="FunFam" id="3.40.50.11260:FF:000003">
    <property type="entry name" value="Heat shock protein 90"/>
    <property type="match status" value="1"/>
</dbReference>
<dbReference type="Gene3D" id="3.30.230.80">
    <property type="match status" value="1"/>
</dbReference>
<dbReference type="Gene3D" id="3.40.50.11260">
    <property type="match status" value="1"/>
</dbReference>
<dbReference type="Gene3D" id="1.20.120.790">
    <property type="entry name" value="Heat shock protein 90, C-terminal domain"/>
    <property type="match status" value="1"/>
</dbReference>
<dbReference type="Gene3D" id="3.30.565.10">
    <property type="entry name" value="Histidine kinase-like ATPase, C-terminal domain"/>
    <property type="match status" value="1"/>
</dbReference>
<dbReference type="HAMAP" id="MF_00505">
    <property type="entry name" value="HSP90"/>
    <property type="match status" value="1"/>
</dbReference>
<dbReference type="InterPro" id="IPR036890">
    <property type="entry name" value="HATPase_C_sf"/>
</dbReference>
<dbReference type="InterPro" id="IPR019805">
    <property type="entry name" value="Heat_shock_protein_90_CS"/>
</dbReference>
<dbReference type="InterPro" id="IPR037196">
    <property type="entry name" value="HSP90_C"/>
</dbReference>
<dbReference type="InterPro" id="IPR001404">
    <property type="entry name" value="Hsp90_fam"/>
</dbReference>
<dbReference type="InterPro" id="IPR020575">
    <property type="entry name" value="Hsp90_N"/>
</dbReference>
<dbReference type="InterPro" id="IPR020568">
    <property type="entry name" value="Ribosomal_Su5_D2-typ_SF"/>
</dbReference>
<dbReference type="NCBIfam" id="NF003555">
    <property type="entry name" value="PRK05218.1"/>
    <property type="match status" value="1"/>
</dbReference>
<dbReference type="PANTHER" id="PTHR11528">
    <property type="entry name" value="HEAT SHOCK PROTEIN 90 FAMILY MEMBER"/>
    <property type="match status" value="1"/>
</dbReference>
<dbReference type="Pfam" id="PF13589">
    <property type="entry name" value="HATPase_c_3"/>
    <property type="match status" value="1"/>
</dbReference>
<dbReference type="Pfam" id="PF00183">
    <property type="entry name" value="HSP90"/>
    <property type="match status" value="1"/>
</dbReference>
<dbReference type="PIRSF" id="PIRSF002583">
    <property type="entry name" value="Hsp90"/>
    <property type="match status" value="1"/>
</dbReference>
<dbReference type="PRINTS" id="PR00775">
    <property type="entry name" value="HEATSHOCK90"/>
</dbReference>
<dbReference type="SMART" id="SM00387">
    <property type="entry name" value="HATPase_c"/>
    <property type="match status" value="1"/>
</dbReference>
<dbReference type="SUPFAM" id="SSF55874">
    <property type="entry name" value="ATPase domain of HSP90 chaperone/DNA topoisomerase II/histidine kinase"/>
    <property type="match status" value="1"/>
</dbReference>
<dbReference type="SUPFAM" id="SSF110942">
    <property type="entry name" value="HSP90 C-terminal domain"/>
    <property type="match status" value="1"/>
</dbReference>
<dbReference type="SUPFAM" id="SSF54211">
    <property type="entry name" value="Ribosomal protein S5 domain 2-like"/>
    <property type="match status" value="1"/>
</dbReference>
<dbReference type="PROSITE" id="PS00014">
    <property type="entry name" value="ER_TARGET"/>
    <property type="match status" value="1"/>
</dbReference>
<dbReference type="PROSITE" id="PS00298">
    <property type="entry name" value="HSP90"/>
    <property type="match status" value="1"/>
</dbReference>